<feature type="chain" id="PRO_0000099700" description="Uncharacterized 7.0 kDa protein">
    <location>
        <begin position="1"/>
        <end position="62"/>
    </location>
</feature>
<proteinExistence type="predicted"/>
<sequence>MALSFNQLSLTHFSSLTFLKRLQYILIVSITPLPNKVGSLIIQYFSFTKSNNGRNTSKVNIL</sequence>
<keyword id="KW-1185">Reference proteome</keyword>
<organismHost>
    <name type="scientific">Homo sapiens</name>
    <name type="common">Human</name>
    <dbReference type="NCBI Taxonomy" id="9606"/>
</organismHost>
<dbReference type="EMBL" id="M35027">
    <property type="status" value="NOT_ANNOTATED_CDS"/>
    <property type="molecule type" value="Genomic_DNA"/>
</dbReference>
<dbReference type="Proteomes" id="UP000008269">
    <property type="component" value="Segment"/>
</dbReference>
<reference key="1">
    <citation type="journal article" date="1990" name="Virology">
        <title>The complete DNA sequence of vaccinia virus.</title>
        <authorList>
            <person name="Goebel S.J."/>
            <person name="Johnson G.P."/>
            <person name="Perkus M.E."/>
            <person name="Davis S.W."/>
            <person name="Winslow J.P."/>
            <person name="Paoletti E."/>
        </authorList>
    </citation>
    <scope>NUCLEOTIDE SEQUENCE [LARGE SCALE GENOMIC DNA]</scope>
</reference>
<reference key="2">
    <citation type="journal article" date="1990" name="Virology">
        <title>Appendix to 'The complete DNA sequence of vaccinia virus'.</title>
        <authorList>
            <person name="Goebel S.J."/>
            <person name="Johnson G.P."/>
            <person name="Perkus M.E."/>
            <person name="Davis S.W."/>
            <person name="Winslow J.P."/>
            <person name="Paoletti E."/>
        </authorList>
    </citation>
    <scope>COMPLETE GENOME</scope>
</reference>
<organism>
    <name type="scientific">Vaccinia virus (strain Copenhagen)</name>
    <name type="common">VACV</name>
    <dbReference type="NCBI Taxonomy" id="10249"/>
    <lineage>
        <taxon>Viruses</taxon>
        <taxon>Varidnaviria</taxon>
        <taxon>Bamfordvirae</taxon>
        <taxon>Nucleocytoviricota</taxon>
        <taxon>Pokkesviricetes</taxon>
        <taxon>Chitovirales</taxon>
        <taxon>Poxviridae</taxon>
        <taxon>Chordopoxvirinae</taxon>
        <taxon>Orthopoxvirus</taxon>
        <taxon>Vaccinia virus</taxon>
    </lineage>
</organism>
<accession>P68489</accession>
<accession>P04319</accession>
<name>YVD1_VACCC</name>
<protein>
    <recommendedName>
        <fullName>Uncharacterized 7.0 kDa protein</fullName>
    </recommendedName>
</protein>